<keyword id="KW-1185">Reference proteome</keyword>
<keyword id="KW-0687">Ribonucleoprotein</keyword>
<keyword id="KW-0689">Ribosomal protein</keyword>
<keyword id="KW-0694">RNA-binding</keyword>
<keyword id="KW-0699">rRNA-binding</keyword>
<keyword id="KW-0820">tRNA-binding</keyword>
<reference key="1">
    <citation type="journal article" date="1999" name="Biosci. Biotechnol. Biochem.">
        <title>Sequence analysis of a 32-kb region including the major ribosomal protein gene clusters from alkaliphilic Bacillus sp. strain C-125.</title>
        <authorList>
            <person name="Takami H."/>
            <person name="Takaki Y."/>
            <person name="Nakasone K."/>
            <person name="Hirama C."/>
            <person name="Inoue A."/>
            <person name="Horikoshi K."/>
        </authorList>
    </citation>
    <scope>NUCLEOTIDE SEQUENCE [GENOMIC DNA]</scope>
    <source>
        <strain>ATCC BAA-125 / DSM 18197 / FERM 7344 / JCM 9153 / C-125</strain>
    </source>
</reference>
<reference key="2">
    <citation type="journal article" date="2000" name="Nucleic Acids Res.">
        <title>Complete genome sequence of the alkaliphilic bacterium Bacillus halodurans and genomic sequence comparison with Bacillus subtilis.</title>
        <authorList>
            <person name="Takami H."/>
            <person name="Nakasone K."/>
            <person name="Takaki Y."/>
            <person name="Maeno G."/>
            <person name="Sasaki R."/>
            <person name="Masui N."/>
            <person name="Fuji F."/>
            <person name="Hirama C."/>
            <person name="Nakamura Y."/>
            <person name="Ogasawara N."/>
            <person name="Kuhara S."/>
            <person name="Horikoshi K."/>
        </authorList>
    </citation>
    <scope>NUCLEOTIDE SEQUENCE [LARGE SCALE GENOMIC DNA]</scope>
    <source>
        <strain>ATCC BAA-125 / DSM 18197 / FERM 7344 / JCM 9153 / C-125</strain>
    </source>
</reference>
<dbReference type="EMBL" id="AB017508">
    <property type="protein sequence ID" value="BAA75266.1"/>
    <property type="molecule type" value="Genomic_DNA"/>
</dbReference>
<dbReference type="EMBL" id="BA000004">
    <property type="protein sequence ID" value="BAB03848.1"/>
    <property type="molecule type" value="Genomic_DNA"/>
</dbReference>
<dbReference type="PIR" id="A83666">
    <property type="entry name" value="A83666"/>
</dbReference>
<dbReference type="PIR" id="T44378">
    <property type="entry name" value="T44378"/>
</dbReference>
<dbReference type="RefSeq" id="WP_010896312.1">
    <property type="nucleotide sequence ID" value="NC_002570.2"/>
</dbReference>
<dbReference type="SMR" id="Q9Z9L9"/>
<dbReference type="STRING" id="272558.gene:10725969"/>
<dbReference type="GeneID" id="87595670"/>
<dbReference type="KEGG" id="bha:BH0129"/>
<dbReference type="eggNOG" id="COG0048">
    <property type="taxonomic scope" value="Bacteria"/>
</dbReference>
<dbReference type="HOGENOM" id="CLU_104295_1_1_9"/>
<dbReference type="OrthoDB" id="9802366at2"/>
<dbReference type="Proteomes" id="UP000001258">
    <property type="component" value="Chromosome"/>
</dbReference>
<dbReference type="GO" id="GO:0015935">
    <property type="term" value="C:small ribosomal subunit"/>
    <property type="evidence" value="ECO:0007669"/>
    <property type="project" value="InterPro"/>
</dbReference>
<dbReference type="GO" id="GO:0019843">
    <property type="term" value="F:rRNA binding"/>
    <property type="evidence" value="ECO:0007669"/>
    <property type="project" value="UniProtKB-UniRule"/>
</dbReference>
<dbReference type="GO" id="GO:0003735">
    <property type="term" value="F:structural constituent of ribosome"/>
    <property type="evidence" value="ECO:0007669"/>
    <property type="project" value="InterPro"/>
</dbReference>
<dbReference type="GO" id="GO:0000049">
    <property type="term" value="F:tRNA binding"/>
    <property type="evidence" value="ECO:0007669"/>
    <property type="project" value="UniProtKB-UniRule"/>
</dbReference>
<dbReference type="GO" id="GO:0006412">
    <property type="term" value="P:translation"/>
    <property type="evidence" value="ECO:0007669"/>
    <property type="project" value="UniProtKB-UniRule"/>
</dbReference>
<dbReference type="CDD" id="cd03368">
    <property type="entry name" value="Ribosomal_S12"/>
    <property type="match status" value="1"/>
</dbReference>
<dbReference type="FunFam" id="2.40.50.140:FF:000001">
    <property type="entry name" value="30S ribosomal protein S12"/>
    <property type="match status" value="1"/>
</dbReference>
<dbReference type="Gene3D" id="2.40.50.140">
    <property type="entry name" value="Nucleic acid-binding proteins"/>
    <property type="match status" value="1"/>
</dbReference>
<dbReference type="HAMAP" id="MF_00403_B">
    <property type="entry name" value="Ribosomal_uS12_B"/>
    <property type="match status" value="1"/>
</dbReference>
<dbReference type="InterPro" id="IPR012340">
    <property type="entry name" value="NA-bd_OB-fold"/>
</dbReference>
<dbReference type="InterPro" id="IPR006032">
    <property type="entry name" value="Ribosomal_uS12"/>
</dbReference>
<dbReference type="InterPro" id="IPR005679">
    <property type="entry name" value="Ribosomal_uS12_bac"/>
</dbReference>
<dbReference type="NCBIfam" id="TIGR00981">
    <property type="entry name" value="rpsL_bact"/>
    <property type="match status" value="1"/>
</dbReference>
<dbReference type="PANTHER" id="PTHR11652">
    <property type="entry name" value="30S RIBOSOMAL PROTEIN S12 FAMILY MEMBER"/>
    <property type="match status" value="1"/>
</dbReference>
<dbReference type="Pfam" id="PF00164">
    <property type="entry name" value="Ribosom_S12_S23"/>
    <property type="match status" value="1"/>
</dbReference>
<dbReference type="PIRSF" id="PIRSF002133">
    <property type="entry name" value="Ribosomal_S12/S23"/>
    <property type="match status" value="1"/>
</dbReference>
<dbReference type="PRINTS" id="PR01034">
    <property type="entry name" value="RIBOSOMALS12"/>
</dbReference>
<dbReference type="SUPFAM" id="SSF50249">
    <property type="entry name" value="Nucleic acid-binding proteins"/>
    <property type="match status" value="1"/>
</dbReference>
<dbReference type="PROSITE" id="PS00055">
    <property type="entry name" value="RIBOSOMAL_S12"/>
    <property type="match status" value="1"/>
</dbReference>
<protein>
    <recommendedName>
        <fullName evidence="1">Small ribosomal subunit protein uS12</fullName>
    </recommendedName>
    <alternativeName>
        <fullName evidence="3">30S ribosomal protein S12</fullName>
    </alternativeName>
</protein>
<proteinExistence type="inferred from homology"/>
<gene>
    <name evidence="1" type="primary">rpsL</name>
    <name type="ordered locus">BH0129</name>
</gene>
<evidence type="ECO:0000255" key="1">
    <source>
        <dbReference type="HAMAP-Rule" id="MF_00403"/>
    </source>
</evidence>
<evidence type="ECO:0000256" key="2">
    <source>
        <dbReference type="SAM" id="MobiDB-lite"/>
    </source>
</evidence>
<evidence type="ECO:0000305" key="3"/>
<name>RS12_HALH5</name>
<feature type="chain" id="PRO_0000146173" description="Small ribosomal subunit protein uS12">
    <location>
        <begin position="1"/>
        <end position="139"/>
    </location>
</feature>
<feature type="region of interest" description="Disordered" evidence="2">
    <location>
        <begin position="1"/>
        <end position="55"/>
    </location>
</feature>
<feature type="compositionally biased region" description="Polar residues" evidence="2">
    <location>
        <begin position="32"/>
        <end position="42"/>
    </location>
</feature>
<feature type="sequence conflict" description="In Ref. 1; BAA75266." evidence="3" ref="1">
    <original>VGTMTP</original>
    <variation>GRYDDT</variation>
    <location>
        <begin position="50"/>
        <end position="55"/>
    </location>
</feature>
<organism>
    <name type="scientific">Halalkalibacterium halodurans (strain ATCC BAA-125 / DSM 18197 / FERM 7344 / JCM 9153 / C-125)</name>
    <name type="common">Bacillus halodurans</name>
    <dbReference type="NCBI Taxonomy" id="272558"/>
    <lineage>
        <taxon>Bacteria</taxon>
        <taxon>Bacillati</taxon>
        <taxon>Bacillota</taxon>
        <taxon>Bacilli</taxon>
        <taxon>Bacillales</taxon>
        <taxon>Bacillaceae</taxon>
        <taxon>Halalkalibacterium (ex Joshi et al. 2022)</taxon>
    </lineage>
</organism>
<comment type="function">
    <text evidence="1">With S4 and S5 plays an important role in translational accuracy.</text>
</comment>
<comment type="function">
    <text evidence="1">Interacts with and stabilizes bases of the 16S rRNA that are involved in tRNA selection in the A site and with the mRNA backbone. Located at the interface of the 30S and 50S subunits, it traverses the body of the 30S subunit contacting proteins on the other side and probably holding the rRNA structure together. The combined cluster of proteins S8, S12 and S17 appears to hold together the shoulder and platform of the 30S subunit.</text>
</comment>
<comment type="subunit">
    <text evidence="1">Part of the 30S ribosomal subunit. Contacts proteins S8 and S17. May interact with IF1 in the 30S initiation complex.</text>
</comment>
<comment type="similarity">
    <text evidence="1">Belongs to the universal ribosomal protein uS12 family.</text>
</comment>
<comment type="caution">
    <text evidence="3">Because the enzyme that would modify Asp-102 to 3-methylthioaspartic acid has not been found in the proteome of this organism, that modification is not predicted.</text>
</comment>
<sequence>MPTINQLIRKGRKAKVKKSDSPALNKGYNSFKKVQTDLSSPQKRGVCTRVGTMTPKKPNSALRKYARVRLSNQIEVTAYIPGIGHNLQEHSVVLIRGGRVKDLPGVRYHIVRGALDTAGVQDRMQGRSKYGTKRPKDKK</sequence>
<accession>Q9Z9L9</accession>
<accession>Q9KGE0</accession>